<reference key="1">
    <citation type="submission" date="2018-05" db="EMBL/GenBank/DDBJ databases">
        <title>Freshwater and sediment microbial communities from various areas in North America, analyzing microbe dynamics in response to fracking.</title>
        <authorList>
            <person name="Lamendella R."/>
        </authorList>
    </citation>
    <scope>NUCLEOTIDE SEQUENCE [LARGE SCALE GENOMIC DNA]</scope>
    <source>
        <strain>67</strain>
    </source>
</reference>
<reference key="2">
    <citation type="journal article" date="2020" name="Proc. Natl. Acad. Sci. U.S.A.">
        <title>Two radical-dependent mechanisms for anaerobic degradation of the globally abundant organosulfur compound dihydroxypropanesulfonate.</title>
        <authorList>
            <person name="Liu J."/>
            <person name="Wei Y."/>
            <person name="Lin L."/>
            <person name="Teng L."/>
            <person name="Yin J."/>
            <person name="Lu Q."/>
            <person name="Chen J."/>
            <person name="Zheng Y."/>
            <person name="Li Y."/>
            <person name="Xu R."/>
            <person name="Zhai W."/>
            <person name="Liu Y."/>
            <person name="Liu Y."/>
            <person name="Cao P."/>
            <person name="Ang E.L."/>
            <person name="Zhao H."/>
            <person name="Yuchi Z."/>
            <person name="Zhang Y."/>
        </authorList>
    </citation>
    <scope>FUNCTION</scope>
    <scope>CATALYTIC ACTIVITY</scope>
    <scope>BIOPHYSICOCHEMICAL PROPERTIES</scope>
</reference>
<gene>
    <name evidence="5" type="primary">hpfG</name>
    <name evidence="8" type="ORF">DET57_12839</name>
</gene>
<dbReference type="EC" id="4.2.1.177" evidence="4"/>
<dbReference type="EMBL" id="QJJG01000028">
    <property type="protein sequence ID" value="PXW36761.1"/>
    <property type="molecule type" value="Genomic_DNA"/>
</dbReference>
<dbReference type="RefSeq" id="WP_110277115.1">
    <property type="nucleotide sequence ID" value="NZ_QJJG01000028.1"/>
</dbReference>
<dbReference type="SMR" id="A0A318FL05"/>
<dbReference type="BioCyc" id="MetaCyc:MONOMER-21508"/>
<dbReference type="BRENDA" id="4.2.1.177">
    <property type="organism ID" value="2811"/>
</dbReference>
<dbReference type="UniPathway" id="UPA00338"/>
<dbReference type="Proteomes" id="UP000247485">
    <property type="component" value="Unassembled WGS sequence"/>
</dbReference>
<dbReference type="GO" id="GO:0005829">
    <property type="term" value="C:cytosol"/>
    <property type="evidence" value="ECO:0007669"/>
    <property type="project" value="TreeGrafter"/>
</dbReference>
<dbReference type="GO" id="GO:0016829">
    <property type="term" value="F:lyase activity"/>
    <property type="evidence" value="ECO:0007669"/>
    <property type="project" value="UniProtKB-KW"/>
</dbReference>
<dbReference type="GO" id="GO:0046306">
    <property type="term" value="P:alkanesulfonate catabolic process"/>
    <property type="evidence" value="ECO:0007669"/>
    <property type="project" value="UniProtKB-UniPathway"/>
</dbReference>
<dbReference type="Gene3D" id="3.20.70.20">
    <property type="match status" value="1"/>
</dbReference>
<dbReference type="InterPro" id="IPR001150">
    <property type="entry name" value="Gly_radical"/>
</dbReference>
<dbReference type="InterPro" id="IPR051215">
    <property type="entry name" value="GRE"/>
</dbReference>
<dbReference type="InterPro" id="IPR010098">
    <property type="entry name" value="PFL2/GDeHydtase_fam"/>
</dbReference>
<dbReference type="InterPro" id="IPR004184">
    <property type="entry name" value="PFL_dom"/>
</dbReference>
<dbReference type="NCBIfam" id="TIGR01774">
    <property type="entry name" value="PFL2-3"/>
    <property type="match status" value="1"/>
</dbReference>
<dbReference type="PANTHER" id="PTHR43641:SF2">
    <property type="entry name" value="DEHYDRATASE YBIW-RELATED"/>
    <property type="match status" value="1"/>
</dbReference>
<dbReference type="PANTHER" id="PTHR43641">
    <property type="entry name" value="FORMATE ACETYLTRANSFERASE 3-RELATED"/>
    <property type="match status" value="1"/>
</dbReference>
<dbReference type="Pfam" id="PF01228">
    <property type="entry name" value="Gly_radical"/>
    <property type="match status" value="1"/>
</dbReference>
<dbReference type="Pfam" id="PF02901">
    <property type="entry name" value="PFL-like"/>
    <property type="match status" value="1"/>
</dbReference>
<dbReference type="SUPFAM" id="SSF51998">
    <property type="entry name" value="PFL-like glycyl radical enzymes"/>
    <property type="match status" value="1"/>
</dbReference>
<dbReference type="PROSITE" id="PS51149">
    <property type="entry name" value="GLY_RADICAL_2"/>
    <property type="match status" value="1"/>
</dbReference>
<dbReference type="PROSITE" id="PS51554">
    <property type="entry name" value="PFL"/>
    <property type="match status" value="1"/>
</dbReference>
<evidence type="ECO:0000250" key="1">
    <source>
        <dbReference type="UniProtKB" id="E5Y7I4"/>
    </source>
</evidence>
<evidence type="ECO:0000255" key="2">
    <source>
        <dbReference type="PROSITE-ProRule" id="PRU00493"/>
    </source>
</evidence>
<evidence type="ECO:0000255" key="3">
    <source>
        <dbReference type="PROSITE-ProRule" id="PRU00887"/>
    </source>
</evidence>
<evidence type="ECO:0000269" key="4">
    <source>
    </source>
</evidence>
<evidence type="ECO:0000303" key="5">
    <source>
    </source>
</evidence>
<evidence type="ECO:0000305" key="6"/>
<evidence type="ECO:0000305" key="7">
    <source>
    </source>
</evidence>
<evidence type="ECO:0000312" key="8">
    <source>
        <dbReference type="EMBL" id="PXW36761.1"/>
    </source>
</evidence>
<proteinExistence type="evidence at protein level"/>
<keyword id="KW-0456">Lyase</keyword>
<keyword id="KW-0556">Organic radical</keyword>
<accession>A0A318FL05</accession>
<sequence>MKVNHTTACGTQPFDKTYSLGYQVHHEDWSPYPRVNRLRQAFLDRPYDIDVERLRLVTEAYQKHEDAPRKLKCARAFENILLNTKLYIYDEDLILGEIAAPAKASPIYPEFSVNWIINEILHSPFEERANDQFYIRNDEERKEIVELCRYWEGKTVDDLINSRLEIDQTKGSEVGEKIFQTNLYHYAGAGHLAIDYARLMAVGYNGLIDNAQAGLEKLSKRDPEYGDKRDFYTAMIIELEAAKKYIARYAKLAQESAEKEENPQRKQELETMALNCQQIAGGVPQTFWQALQLFNFATTLIQIESNGHSISYGRMDQWLYPWFAADMKNNTITKEFALELIEVQYVKMNNPTKLKDKGTVAVRNGRGFGGESLTLGGVDREGNDATNDLTMLMLEGSAHTRMMNPWVCVRMHENTPYELKIKTVECIRAGYGHPKLFNDAPSIKGMMRKGMTLEEARDYCVVGCVELDLAGKEYGWHDAAYVNTPKMMEMVVNGGRSLSTGEQLGPDTGSLDTYKSFDEVLASVDQQFEYWTDQMCSSLNIIDNAHRELKPVPYVSAFYEDCMISGKDLTEGGAKYNGIAPQAAGMATCADSLATIKQLVFDEKRYSGAEMLQAVKDNWVGHEKLYALVNSSKVRHYGNDDDYADDLFKFMFECYCRHISGRKTPRGGEFSPGVYSVNANVGMGLNTNASIDGRKKFEPISDNMGPVHTDGGSHDICGPTALVNSLTKVDHSLATNGTLMNLRFPQEAVAGVEGRDNLLSFIDEYIAKQAMHVQFNIMSSATMRAAQKKPEDYKDMLVRVAGYSAYFVELGKPLQKDLIQRTELHF</sequence>
<organism>
    <name type="scientific">Klebsiella oxytoca</name>
    <dbReference type="NCBI Taxonomy" id="571"/>
    <lineage>
        <taxon>Bacteria</taxon>
        <taxon>Pseudomonadati</taxon>
        <taxon>Pseudomonadota</taxon>
        <taxon>Gammaproteobacteria</taxon>
        <taxon>Enterobacterales</taxon>
        <taxon>Enterobacteriaceae</taxon>
        <taxon>Klebsiella/Raoultella group</taxon>
        <taxon>Klebsiella</taxon>
    </lineage>
</organism>
<name>HPFG_KLEOX</name>
<protein>
    <recommendedName>
        <fullName evidence="6">(2S)-3-sulfopropanediol dehydratase</fullName>
        <ecNumber evidence="4">4.2.1.177</ecNumber>
    </recommendedName>
    <alternativeName>
        <fullName evidence="5">(S)-DHPS dehydratase</fullName>
    </alternativeName>
</protein>
<feature type="chain" id="PRO_0000457585" description="(2S)-3-sulfopropanediol dehydratase">
    <location>
        <begin position="1"/>
        <end position="826"/>
    </location>
</feature>
<feature type="domain" description="PFL" evidence="3">
    <location>
        <begin position="33"/>
        <end position="695"/>
    </location>
</feature>
<feature type="domain" description="Glycine radical" evidence="2">
    <location>
        <begin position="706"/>
        <end position="826"/>
    </location>
</feature>
<feature type="active site" description="Cysteine radical intermediate" evidence="1">
    <location>
        <position position="464"/>
    </location>
</feature>
<feature type="active site" description="Proton acceptor" evidence="1">
    <location>
        <position position="466"/>
    </location>
</feature>
<feature type="modified residue" description="Glycine radical" evidence="2">
    <location>
        <position position="802"/>
    </location>
</feature>
<comment type="function">
    <text evidence="4">Involved in the degradation of the organosulfur compound 2(S)-dihydroxypropanesulfonate (DHPS) (PubMed:32571930). Catalyzes the radical-mediated dehydration of DHPS to produce 3-sulfopropionaldehyde (3-oxopropane-1-sulfonate) (PubMed:32571930).</text>
</comment>
<comment type="catalytic activity">
    <reaction evidence="4">
        <text>(2S)-3-sulfopropanediol = 3-oxopropane-1-sulfonate + H2O</text>
        <dbReference type="Rhea" id="RHEA:68600"/>
        <dbReference type="ChEBI" id="CHEBI:15377"/>
        <dbReference type="ChEBI" id="CHEBI:176527"/>
        <dbReference type="ChEBI" id="CHEBI:176528"/>
        <dbReference type="EC" id="4.2.1.177"/>
    </reaction>
    <physiologicalReaction direction="left-to-right" evidence="4">
        <dbReference type="Rhea" id="RHEA:68601"/>
    </physiologicalReaction>
</comment>
<comment type="biophysicochemical properties">
    <kinetics>
        <KM evidence="4">5 mM for (2S)-3-sulfopropanediol</KM>
        <text evidence="4">kcat is 130 sec(-1).</text>
    </kinetics>
</comment>
<comment type="pathway">
    <text evidence="7">Organosulfur degradation; alkanesulfonate degradation.</text>
</comment>
<comment type="PTM">
    <text evidence="4">Requires the activating protein HpfH to generate the key active site glycyl radical on Gly-802 that is involved in catalysis.</text>
</comment>
<comment type="similarity">
    <text evidence="6">Belongs to the glycyl radical enzyme (GRE) family.</text>
</comment>